<dbReference type="EC" id="2.7.2.11" evidence="1"/>
<dbReference type="EMBL" id="CP000117">
    <property type="protein sequence ID" value="ABA23412.1"/>
    <property type="molecule type" value="Genomic_DNA"/>
</dbReference>
<dbReference type="SMR" id="Q3M6H4"/>
<dbReference type="STRING" id="240292.Ava_3807"/>
<dbReference type="KEGG" id="ava:Ava_3807"/>
<dbReference type="eggNOG" id="COG0263">
    <property type="taxonomic scope" value="Bacteria"/>
</dbReference>
<dbReference type="HOGENOM" id="CLU_025400_2_0_3"/>
<dbReference type="UniPathway" id="UPA00098">
    <property type="reaction ID" value="UER00359"/>
</dbReference>
<dbReference type="Proteomes" id="UP000002533">
    <property type="component" value="Chromosome"/>
</dbReference>
<dbReference type="GO" id="GO:0005829">
    <property type="term" value="C:cytosol"/>
    <property type="evidence" value="ECO:0007669"/>
    <property type="project" value="TreeGrafter"/>
</dbReference>
<dbReference type="GO" id="GO:0005524">
    <property type="term" value="F:ATP binding"/>
    <property type="evidence" value="ECO:0007669"/>
    <property type="project" value="UniProtKB-KW"/>
</dbReference>
<dbReference type="GO" id="GO:0004349">
    <property type="term" value="F:glutamate 5-kinase activity"/>
    <property type="evidence" value="ECO:0007669"/>
    <property type="project" value="UniProtKB-UniRule"/>
</dbReference>
<dbReference type="GO" id="GO:0003723">
    <property type="term" value="F:RNA binding"/>
    <property type="evidence" value="ECO:0007669"/>
    <property type="project" value="InterPro"/>
</dbReference>
<dbReference type="GO" id="GO:0055129">
    <property type="term" value="P:L-proline biosynthetic process"/>
    <property type="evidence" value="ECO:0007669"/>
    <property type="project" value="UniProtKB-UniRule"/>
</dbReference>
<dbReference type="CDD" id="cd04242">
    <property type="entry name" value="AAK_G5K_ProB"/>
    <property type="match status" value="1"/>
</dbReference>
<dbReference type="CDD" id="cd21157">
    <property type="entry name" value="PUA_G5K"/>
    <property type="match status" value="1"/>
</dbReference>
<dbReference type="FunFam" id="2.30.130.10:FF:000007">
    <property type="entry name" value="Glutamate 5-kinase"/>
    <property type="match status" value="1"/>
</dbReference>
<dbReference type="FunFam" id="3.40.1160.10:FF:000018">
    <property type="entry name" value="Glutamate 5-kinase"/>
    <property type="match status" value="1"/>
</dbReference>
<dbReference type="Gene3D" id="3.40.1160.10">
    <property type="entry name" value="Acetylglutamate kinase-like"/>
    <property type="match status" value="2"/>
</dbReference>
<dbReference type="Gene3D" id="2.30.130.10">
    <property type="entry name" value="PUA domain"/>
    <property type="match status" value="1"/>
</dbReference>
<dbReference type="HAMAP" id="MF_00456">
    <property type="entry name" value="ProB"/>
    <property type="match status" value="1"/>
</dbReference>
<dbReference type="InterPro" id="IPR036393">
    <property type="entry name" value="AceGlu_kinase-like_sf"/>
</dbReference>
<dbReference type="InterPro" id="IPR001048">
    <property type="entry name" value="Asp/Glu/Uridylate_kinase"/>
</dbReference>
<dbReference type="InterPro" id="IPR041739">
    <property type="entry name" value="G5K_ProB"/>
</dbReference>
<dbReference type="InterPro" id="IPR001057">
    <property type="entry name" value="Glu/AcGlu_kinase"/>
</dbReference>
<dbReference type="InterPro" id="IPR011529">
    <property type="entry name" value="Glu_5kinase"/>
</dbReference>
<dbReference type="InterPro" id="IPR005715">
    <property type="entry name" value="Glu_5kinase/COase_Synthase"/>
</dbReference>
<dbReference type="InterPro" id="IPR019797">
    <property type="entry name" value="Glutamate_5-kinase_CS"/>
</dbReference>
<dbReference type="InterPro" id="IPR002478">
    <property type="entry name" value="PUA"/>
</dbReference>
<dbReference type="InterPro" id="IPR015947">
    <property type="entry name" value="PUA-like_sf"/>
</dbReference>
<dbReference type="InterPro" id="IPR036974">
    <property type="entry name" value="PUA_sf"/>
</dbReference>
<dbReference type="NCBIfam" id="TIGR01027">
    <property type="entry name" value="proB"/>
    <property type="match status" value="1"/>
</dbReference>
<dbReference type="PANTHER" id="PTHR43654">
    <property type="entry name" value="GLUTAMATE 5-KINASE"/>
    <property type="match status" value="1"/>
</dbReference>
<dbReference type="PANTHER" id="PTHR43654:SF3">
    <property type="entry name" value="GLUTAMATE 5-KINASE"/>
    <property type="match status" value="1"/>
</dbReference>
<dbReference type="Pfam" id="PF00696">
    <property type="entry name" value="AA_kinase"/>
    <property type="match status" value="1"/>
</dbReference>
<dbReference type="Pfam" id="PF01472">
    <property type="entry name" value="PUA"/>
    <property type="match status" value="1"/>
</dbReference>
<dbReference type="PIRSF" id="PIRSF000729">
    <property type="entry name" value="GK"/>
    <property type="match status" value="1"/>
</dbReference>
<dbReference type="PRINTS" id="PR00474">
    <property type="entry name" value="GLU5KINASE"/>
</dbReference>
<dbReference type="SMART" id="SM00359">
    <property type="entry name" value="PUA"/>
    <property type="match status" value="1"/>
</dbReference>
<dbReference type="SUPFAM" id="SSF53633">
    <property type="entry name" value="Carbamate kinase-like"/>
    <property type="match status" value="1"/>
</dbReference>
<dbReference type="SUPFAM" id="SSF88697">
    <property type="entry name" value="PUA domain-like"/>
    <property type="match status" value="1"/>
</dbReference>
<dbReference type="PROSITE" id="PS00902">
    <property type="entry name" value="GLUTAMATE_5_KINASE"/>
    <property type="match status" value="1"/>
</dbReference>
<dbReference type="PROSITE" id="PS50890">
    <property type="entry name" value="PUA"/>
    <property type="match status" value="1"/>
</dbReference>
<name>PROB_TRIV2</name>
<gene>
    <name evidence="1" type="primary">proB</name>
    <name type="ordered locus">Ava_3807</name>
</gene>
<sequence length="369" mass="39704">MTKTIVVKIGTSSLTQPETGQLALSTIATLAETLSYLRQQGNQVILVSSGAVGVGCARLGLTERPKAIALKQAVAAVGQGRLMRVYDDLFTTLQQPIAQVLLTRSDLVQRSRYLNVYNTFRELLALGVIPVVNENDTVAVDELKFGDNDTLSALVASLVEADWLFLLTDVDRLYSADPRSVPDARPISLVTSIKELADLQVQTGSQGSQWGTGGMMTKISAARIAIAAGVRTVITQGRYPRNIEKIIQGELIGTHFQPQPEPTSARKRWIAYGLVPTGKLYLDSGAIAAIVKAGKSLLPAGVKTVAGEFEPQDAVQLLDPQGNEIARGLVNYSSKDLQQICGRHSKEISTILGYVGAETVIHRDNLVLT</sequence>
<accession>Q3M6H4</accession>
<keyword id="KW-0028">Amino-acid biosynthesis</keyword>
<keyword id="KW-0067">ATP-binding</keyword>
<keyword id="KW-0963">Cytoplasm</keyword>
<keyword id="KW-0418">Kinase</keyword>
<keyword id="KW-0547">Nucleotide-binding</keyword>
<keyword id="KW-0641">Proline biosynthesis</keyword>
<keyword id="KW-0808">Transferase</keyword>
<proteinExistence type="inferred from homology"/>
<feature type="chain" id="PRO_0000230036" description="Glutamate 5-kinase">
    <location>
        <begin position="1"/>
        <end position="369"/>
    </location>
</feature>
<feature type="domain" description="PUA" evidence="1">
    <location>
        <begin position="277"/>
        <end position="355"/>
    </location>
</feature>
<feature type="binding site" evidence="1">
    <location>
        <position position="8"/>
    </location>
    <ligand>
        <name>ATP</name>
        <dbReference type="ChEBI" id="CHEBI:30616"/>
    </ligand>
</feature>
<feature type="binding site" evidence="1">
    <location>
        <position position="49"/>
    </location>
    <ligand>
        <name>substrate</name>
    </ligand>
</feature>
<feature type="binding site" evidence="1">
    <location>
        <position position="136"/>
    </location>
    <ligand>
        <name>substrate</name>
    </ligand>
</feature>
<feature type="binding site" evidence="1">
    <location>
        <position position="148"/>
    </location>
    <ligand>
        <name>substrate</name>
    </ligand>
</feature>
<feature type="binding site" evidence="1">
    <location>
        <begin position="168"/>
        <end position="169"/>
    </location>
    <ligand>
        <name>ATP</name>
        <dbReference type="ChEBI" id="CHEBI:30616"/>
    </ligand>
</feature>
<feature type="binding site" evidence="1">
    <location>
        <begin position="212"/>
        <end position="218"/>
    </location>
    <ligand>
        <name>ATP</name>
        <dbReference type="ChEBI" id="CHEBI:30616"/>
    </ligand>
</feature>
<protein>
    <recommendedName>
        <fullName evidence="1">Glutamate 5-kinase</fullName>
        <ecNumber evidence="1">2.7.2.11</ecNumber>
    </recommendedName>
    <alternativeName>
        <fullName evidence="1">Gamma-glutamyl kinase</fullName>
        <shortName evidence="1">GK</shortName>
    </alternativeName>
</protein>
<comment type="function">
    <text evidence="1">Catalyzes the transfer of a phosphate group to glutamate to form L-glutamate 5-phosphate.</text>
</comment>
<comment type="catalytic activity">
    <reaction evidence="1">
        <text>L-glutamate + ATP = L-glutamyl 5-phosphate + ADP</text>
        <dbReference type="Rhea" id="RHEA:14877"/>
        <dbReference type="ChEBI" id="CHEBI:29985"/>
        <dbReference type="ChEBI" id="CHEBI:30616"/>
        <dbReference type="ChEBI" id="CHEBI:58274"/>
        <dbReference type="ChEBI" id="CHEBI:456216"/>
        <dbReference type="EC" id="2.7.2.11"/>
    </reaction>
</comment>
<comment type="pathway">
    <text evidence="1">Amino-acid biosynthesis; L-proline biosynthesis; L-glutamate 5-semialdehyde from L-glutamate: step 1/2.</text>
</comment>
<comment type="subcellular location">
    <subcellularLocation>
        <location evidence="1">Cytoplasm</location>
    </subcellularLocation>
</comment>
<comment type="similarity">
    <text evidence="1">Belongs to the glutamate 5-kinase family.</text>
</comment>
<evidence type="ECO:0000255" key="1">
    <source>
        <dbReference type="HAMAP-Rule" id="MF_00456"/>
    </source>
</evidence>
<organism>
    <name type="scientific">Trichormus variabilis (strain ATCC 29413 / PCC 7937)</name>
    <name type="common">Anabaena variabilis</name>
    <dbReference type="NCBI Taxonomy" id="240292"/>
    <lineage>
        <taxon>Bacteria</taxon>
        <taxon>Bacillati</taxon>
        <taxon>Cyanobacteriota</taxon>
        <taxon>Cyanophyceae</taxon>
        <taxon>Nostocales</taxon>
        <taxon>Nostocaceae</taxon>
        <taxon>Trichormus</taxon>
    </lineage>
</organism>
<reference key="1">
    <citation type="journal article" date="2014" name="Stand. Genomic Sci.">
        <title>Complete genome sequence of Anabaena variabilis ATCC 29413.</title>
        <authorList>
            <person name="Thiel T."/>
            <person name="Pratte B.S."/>
            <person name="Zhong J."/>
            <person name="Goodwin L."/>
            <person name="Copeland A."/>
            <person name="Lucas S."/>
            <person name="Han C."/>
            <person name="Pitluck S."/>
            <person name="Land M.L."/>
            <person name="Kyrpides N.C."/>
            <person name="Woyke T."/>
        </authorList>
    </citation>
    <scope>NUCLEOTIDE SEQUENCE [LARGE SCALE GENOMIC DNA]</scope>
    <source>
        <strain>ATCC 29413 / PCC 7937</strain>
    </source>
</reference>